<dbReference type="EMBL" id="AB168507">
    <property type="protein sequence ID" value="BAE00626.1"/>
    <property type="molecule type" value="mRNA"/>
</dbReference>
<dbReference type="RefSeq" id="NP_001270728.1">
    <property type="nucleotide sequence ID" value="NM_001283799.1"/>
</dbReference>
<dbReference type="RefSeq" id="XP_045224584.2">
    <property type="nucleotide sequence ID" value="XM_045368649.2"/>
</dbReference>
<dbReference type="GeneID" id="101925985"/>
<dbReference type="eggNOG" id="ENOG502SSVJ">
    <property type="taxonomic scope" value="Eukaryota"/>
</dbReference>
<dbReference type="Proteomes" id="UP000233100">
    <property type="component" value="Unplaced"/>
</dbReference>
<dbReference type="InterPro" id="IPR031461">
    <property type="entry name" value="DUF4679"/>
</dbReference>
<dbReference type="PANTHER" id="PTHR22235">
    <property type="entry name" value="PROLINE-RICH PROTEIN 30"/>
    <property type="match status" value="1"/>
</dbReference>
<dbReference type="PANTHER" id="PTHR22235:SF2">
    <property type="entry name" value="PROLINE-RICH PROTEIN 30"/>
    <property type="match status" value="1"/>
</dbReference>
<dbReference type="Pfam" id="PF15728">
    <property type="entry name" value="DUF4679"/>
    <property type="match status" value="1"/>
</dbReference>
<reference key="1">
    <citation type="submission" date="2005-06" db="EMBL/GenBank/DDBJ databases">
        <title>DNA sequences of macaque genes expressed in brain or testis and its evolutionary implications.</title>
        <authorList>
            <consortium name="International consortium for macaque cDNA sequencing and analysis"/>
        </authorList>
    </citation>
    <scope>NUCLEOTIDE SEQUENCE [LARGE SCALE MRNA]</scope>
    <source>
        <tissue>Testis</tissue>
    </source>
</reference>
<evidence type="ECO:0000256" key="1">
    <source>
        <dbReference type="SAM" id="MobiDB-lite"/>
    </source>
</evidence>
<feature type="chain" id="PRO_0000312277" description="Proline-rich protein 30">
    <location>
        <begin position="1"/>
        <end position="412"/>
    </location>
</feature>
<feature type="region of interest" description="Disordered" evidence="1">
    <location>
        <begin position="33"/>
        <end position="75"/>
    </location>
</feature>
<feature type="region of interest" description="Disordered" evidence="1">
    <location>
        <begin position="123"/>
        <end position="174"/>
    </location>
</feature>
<feature type="region of interest" description="Disordered" evidence="1">
    <location>
        <begin position="318"/>
        <end position="412"/>
    </location>
</feature>
<feature type="compositionally biased region" description="Polar residues" evidence="1">
    <location>
        <begin position="33"/>
        <end position="45"/>
    </location>
</feature>
<feature type="compositionally biased region" description="Low complexity" evidence="1">
    <location>
        <begin position="126"/>
        <end position="142"/>
    </location>
</feature>
<feature type="compositionally biased region" description="Low complexity" evidence="1">
    <location>
        <begin position="334"/>
        <end position="350"/>
    </location>
</feature>
<feature type="compositionally biased region" description="Polar residues" evidence="1">
    <location>
        <begin position="353"/>
        <end position="372"/>
    </location>
</feature>
<gene>
    <name type="primary">PRR30</name>
    <name type="ORF">QtsA-12646</name>
</gene>
<accession>Q4R8E6</accession>
<proteinExistence type="evidence at transcript level"/>
<sequence length="412" mass="44676">MLPQNKDQVLPQTSVLPGCPPWGFSQLVDSSPHNLQPLSAHQSLRPSHPPFFSTQSHHPSFSPPASPSPGFQFGSCDPNSDFVPHPCSPSLPSSPTFFHQNYLSLPNPRASSPSNHWLYPSPPLTPSFSPSQPQNSSLPHSPCQSPSHPEDLHSSTLTSPGPSPPSQRLHSNRQTWRWHQYRDTGSGSPGVVERCVPSEKDPAQFRDPGALAQALVVQLGHRRIAHDLRLLLLQHLWLGRTGQAPVVEYPICLVCLRPRSPSCPLPKYRTGPRLLAFPQLLPCVEGQESGPLRIGIGFGLRLPQGQARALHLLPEKRPKEVGPQGKDPQACGHPSPAFQPPAAQARADPAPGTPSQTRSFRSAGLQSPNSPRCFSGPPPRAPKQATTSPKPRPCPAPKRPVSLELILQKSSV</sequence>
<protein>
    <recommendedName>
        <fullName>Proline-rich protein 30</fullName>
    </recommendedName>
</protein>
<organism>
    <name type="scientific">Macaca fascicularis</name>
    <name type="common">Crab-eating macaque</name>
    <name type="synonym">Cynomolgus monkey</name>
    <dbReference type="NCBI Taxonomy" id="9541"/>
    <lineage>
        <taxon>Eukaryota</taxon>
        <taxon>Metazoa</taxon>
        <taxon>Chordata</taxon>
        <taxon>Craniata</taxon>
        <taxon>Vertebrata</taxon>
        <taxon>Euteleostomi</taxon>
        <taxon>Mammalia</taxon>
        <taxon>Eutheria</taxon>
        <taxon>Euarchontoglires</taxon>
        <taxon>Primates</taxon>
        <taxon>Haplorrhini</taxon>
        <taxon>Catarrhini</taxon>
        <taxon>Cercopithecidae</taxon>
        <taxon>Cercopithecinae</taxon>
        <taxon>Macaca</taxon>
    </lineage>
</organism>
<name>PRR30_MACFA</name>
<keyword id="KW-1185">Reference proteome</keyword>